<proteinExistence type="inferred from homology"/>
<feature type="chain" id="PRO_1000122760" description="tRNA uridine 5-carboxymethylaminomethyl modification enzyme MnmG">
    <location>
        <begin position="1"/>
        <end position="644"/>
    </location>
</feature>
<feature type="binding site" evidence="1">
    <location>
        <begin position="10"/>
        <end position="15"/>
    </location>
    <ligand>
        <name>FAD</name>
        <dbReference type="ChEBI" id="CHEBI:57692"/>
    </ligand>
</feature>
<feature type="binding site" evidence="1">
    <location>
        <begin position="273"/>
        <end position="287"/>
    </location>
    <ligand>
        <name>NAD(+)</name>
        <dbReference type="ChEBI" id="CHEBI:57540"/>
    </ligand>
</feature>
<keyword id="KW-0963">Cytoplasm</keyword>
<keyword id="KW-0274">FAD</keyword>
<keyword id="KW-0285">Flavoprotein</keyword>
<keyword id="KW-0520">NAD</keyword>
<keyword id="KW-0819">tRNA processing</keyword>
<sequence>MHKYDVVVVGGGHAGCEAAAAAARLGTNTLLITHKISTIGEMSCNPAIGGVAKGVVVREVDALDGIMGRAIDRASIHSVILNSSRGAAVWGPRAQADRKLYKQAIQEIILNYNNLTVKEESVDDFLIESNNNGELCIKAVITSSGEHILTGKVVLTTGTFLQGVIHIGEQTTPSGRMGDKPAVELANTLNKYDFRLGRLRTGTPPRLDRGTINWSILQEQVGDNPPVPFSYLTEKINQPQVSCFITHTNENTHKIIRENLHRSASSYLSDVVAPRYCPSIEVKVKKFAEKSSHQIFLEPEGLDDDTVYPNGISNSLPIEVQREMIKSIKGLENAEILRPGYAVEYDYIDPRELFHTLETKKVKGLYFAGQINGTTGYEEAAGQGIIAGINAALSAFEKKESFVLHRTDSYIGVMIDDLVTKGVIEPYRLFTSRAEYRLAIRSDNADRRLTQKGYDISLVSHERYSVLQNKLESIKQLEEKLGSLTITPEQLRSYGIKISYDGIRKTALDLLSYPNIDWNKLQEIWPELSSVTRWNDKMGHTKADNRAKNEICEAVEIEAKYKPYLIRQEADMKFLREEINTQIPIDFNYSQVKGLSSEVIEKLQTIKPATIGIAKQIQGITPAAIVSILVYLRNRKTKVAANFV</sequence>
<accession>C0R430</accession>
<evidence type="ECO:0000255" key="1">
    <source>
        <dbReference type="HAMAP-Rule" id="MF_00129"/>
    </source>
</evidence>
<protein>
    <recommendedName>
        <fullName evidence="1">tRNA uridine 5-carboxymethylaminomethyl modification enzyme MnmG</fullName>
    </recommendedName>
    <alternativeName>
        <fullName evidence="1">Glucose-inhibited division protein A</fullName>
    </alternativeName>
</protein>
<reference key="1">
    <citation type="journal article" date="2009" name="Proc. Natl. Acad. Sci. U.S.A.">
        <title>The mosaic genome structure of the Wolbachia wRi strain infecting Drosophila simulans.</title>
        <authorList>
            <person name="Klasson L."/>
            <person name="Westberg J."/>
            <person name="Sapountzis P."/>
            <person name="Naeslund K."/>
            <person name="Lutnaes Y."/>
            <person name="Darby A.C."/>
            <person name="Veneti Z."/>
            <person name="Chen L."/>
            <person name="Braig H.R."/>
            <person name="Garrett R."/>
            <person name="Bourtzis K."/>
            <person name="Andersson S.G."/>
        </authorList>
    </citation>
    <scope>NUCLEOTIDE SEQUENCE [LARGE SCALE GENOMIC DNA]</scope>
    <source>
        <strain>wRi</strain>
    </source>
</reference>
<comment type="function">
    <text evidence="1">NAD-binding protein involved in the addition of a carboxymethylaminomethyl (cmnm) group at the wobble position (U34) of certain tRNAs, forming tRNA-cmnm(5)s(2)U34.</text>
</comment>
<comment type="cofactor">
    <cofactor evidence="1">
        <name>FAD</name>
        <dbReference type="ChEBI" id="CHEBI:57692"/>
    </cofactor>
</comment>
<comment type="subunit">
    <text evidence="1">Homodimer. Heterotetramer of two MnmE and two MnmG subunits.</text>
</comment>
<comment type="subcellular location">
    <subcellularLocation>
        <location evidence="1">Cytoplasm</location>
    </subcellularLocation>
</comment>
<comment type="similarity">
    <text evidence="1">Belongs to the MnmG family.</text>
</comment>
<gene>
    <name evidence="1" type="primary">mnmG</name>
    <name evidence="1" type="synonym">gidA</name>
    <name type="ordered locus">WRi_009600</name>
</gene>
<name>MNMG_WOLWR</name>
<dbReference type="EMBL" id="CP001391">
    <property type="protein sequence ID" value="ACN95672.1"/>
    <property type="molecule type" value="Genomic_DNA"/>
</dbReference>
<dbReference type="RefSeq" id="WP_007548926.1">
    <property type="nucleotide sequence ID" value="NZ_MKIF01000070.1"/>
</dbReference>
<dbReference type="SMR" id="C0R430"/>
<dbReference type="STRING" id="66084.WRi_009600"/>
<dbReference type="KEGG" id="wri:WRi_009600"/>
<dbReference type="HOGENOM" id="CLU_007831_2_2_5"/>
<dbReference type="Proteomes" id="UP000001293">
    <property type="component" value="Chromosome"/>
</dbReference>
<dbReference type="GO" id="GO:0005829">
    <property type="term" value="C:cytosol"/>
    <property type="evidence" value="ECO:0007669"/>
    <property type="project" value="TreeGrafter"/>
</dbReference>
<dbReference type="GO" id="GO:0050660">
    <property type="term" value="F:flavin adenine dinucleotide binding"/>
    <property type="evidence" value="ECO:0007669"/>
    <property type="project" value="UniProtKB-UniRule"/>
</dbReference>
<dbReference type="GO" id="GO:0030488">
    <property type="term" value="P:tRNA methylation"/>
    <property type="evidence" value="ECO:0007669"/>
    <property type="project" value="TreeGrafter"/>
</dbReference>
<dbReference type="GO" id="GO:0002098">
    <property type="term" value="P:tRNA wobble uridine modification"/>
    <property type="evidence" value="ECO:0007669"/>
    <property type="project" value="InterPro"/>
</dbReference>
<dbReference type="FunFam" id="3.50.50.60:FF:000082">
    <property type="entry name" value="protein MTO1 homolog, mitochondrial isoform X1"/>
    <property type="match status" value="1"/>
</dbReference>
<dbReference type="FunFam" id="1.10.150.570:FF:000001">
    <property type="entry name" value="tRNA uridine 5-carboxymethylaminomethyl modification enzyme MnmG"/>
    <property type="match status" value="1"/>
</dbReference>
<dbReference type="FunFam" id="3.50.50.60:FF:000002">
    <property type="entry name" value="tRNA uridine 5-carboxymethylaminomethyl modification enzyme MnmG"/>
    <property type="match status" value="1"/>
</dbReference>
<dbReference type="Gene3D" id="3.50.50.60">
    <property type="entry name" value="FAD/NAD(P)-binding domain"/>
    <property type="match status" value="2"/>
</dbReference>
<dbReference type="Gene3D" id="1.10.150.570">
    <property type="entry name" value="GidA associated domain, C-terminal subdomain"/>
    <property type="match status" value="1"/>
</dbReference>
<dbReference type="Gene3D" id="1.10.10.1800">
    <property type="entry name" value="tRNA uridine 5-carboxymethylaminomethyl modification enzyme MnmG/GidA"/>
    <property type="match status" value="1"/>
</dbReference>
<dbReference type="HAMAP" id="MF_00129">
    <property type="entry name" value="MnmG_GidA"/>
    <property type="match status" value="1"/>
</dbReference>
<dbReference type="InterPro" id="IPR036188">
    <property type="entry name" value="FAD/NAD-bd_sf"/>
</dbReference>
<dbReference type="InterPro" id="IPR049312">
    <property type="entry name" value="GIDA_C_N"/>
</dbReference>
<dbReference type="InterPro" id="IPR004416">
    <property type="entry name" value="MnmG"/>
</dbReference>
<dbReference type="InterPro" id="IPR002218">
    <property type="entry name" value="MnmG-rel"/>
</dbReference>
<dbReference type="InterPro" id="IPR020595">
    <property type="entry name" value="MnmG-rel_CS"/>
</dbReference>
<dbReference type="InterPro" id="IPR026904">
    <property type="entry name" value="MnmG_C"/>
</dbReference>
<dbReference type="InterPro" id="IPR047001">
    <property type="entry name" value="MnmG_C_subdom"/>
</dbReference>
<dbReference type="InterPro" id="IPR044920">
    <property type="entry name" value="MnmG_C_subdom_sf"/>
</dbReference>
<dbReference type="InterPro" id="IPR040131">
    <property type="entry name" value="MnmG_N"/>
</dbReference>
<dbReference type="NCBIfam" id="TIGR00136">
    <property type="entry name" value="mnmG_gidA"/>
    <property type="match status" value="1"/>
</dbReference>
<dbReference type="PANTHER" id="PTHR11806">
    <property type="entry name" value="GLUCOSE INHIBITED DIVISION PROTEIN A"/>
    <property type="match status" value="1"/>
</dbReference>
<dbReference type="PANTHER" id="PTHR11806:SF0">
    <property type="entry name" value="PROTEIN MTO1 HOMOLOG, MITOCHONDRIAL"/>
    <property type="match status" value="1"/>
</dbReference>
<dbReference type="Pfam" id="PF01134">
    <property type="entry name" value="GIDA"/>
    <property type="match status" value="1"/>
</dbReference>
<dbReference type="Pfam" id="PF21680">
    <property type="entry name" value="GIDA_C_1st"/>
    <property type="match status" value="1"/>
</dbReference>
<dbReference type="Pfam" id="PF13932">
    <property type="entry name" value="SAM_GIDA_C"/>
    <property type="match status" value="1"/>
</dbReference>
<dbReference type="SMART" id="SM01228">
    <property type="entry name" value="GIDA_assoc_3"/>
    <property type="match status" value="1"/>
</dbReference>
<dbReference type="SUPFAM" id="SSF51905">
    <property type="entry name" value="FAD/NAD(P)-binding domain"/>
    <property type="match status" value="1"/>
</dbReference>
<dbReference type="PROSITE" id="PS01280">
    <property type="entry name" value="GIDA_1"/>
    <property type="match status" value="1"/>
</dbReference>
<dbReference type="PROSITE" id="PS01281">
    <property type="entry name" value="GIDA_2"/>
    <property type="match status" value="1"/>
</dbReference>
<organism>
    <name type="scientific">Wolbachia sp. subsp. Drosophila simulans (strain wRi)</name>
    <dbReference type="NCBI Taxonomy" id="66084"/>
    <lineage>
        <taxon>Bacteria</taxon>
        <taxon>Pseudomonadati</taxon>
        <taxon>Pseudomonadota</taxon>
        <taxon>Alphaproteobacteria</taxon>
        <taxon>Rickettsiales</taxon>
        <taxon>Anaplasmataceae</taxon>
        <taxon>Wolbachieae</taxon>
        <taxon>Wolbachia</taxon>
    </lineage>
</organism>